<keyword id="KW-0032">Aminotransferase</keyword>
<keyword id="KW-0663">Pyridoxal phosphate</keyword>
<keyword id="KW-1185">Reference proteome</keyword>
<keyword id="KW-0808">Transferase</keyword>
<organism>
    <name type="scientific">Mycobacterium tuberculosis (strain CDC 1551 / Oshkosh)</name>
    <dbReference type="NCBI Taxonomy" id="83331"/>
    <lineage>
        <taxon>Bacteria</taxon>
        <taxon>Bacillati</taxon>
        <taxon>Actinomycetota</taxon>
        <taxon>Actinomycetes</taxon>
        <taxon>Mycobacteriales</taxon>
        <taxon>Mycobacteriaceae</taxon>
        <taxon>Mycobacterium</taxon>
        <taxon>Mycobacterium tuberculosis complex</taxon>
    </lineage>
</organism>
<evidence type="ECO:0000255" key="1">
    <source>
        <dbReference type="HAMAP-Rule" id="MF_01513"/>
    </source>
</evidence>
<feature type="chain" id="PRO_0000427283" description="Aromatic amino acid aminotransferase">
    <location>
        <begin position="1"/>
        <end position="353"/>
    </location>
</feature>
<feature type="modified residue" description="N6-(pyridoxal phosphate)lysine" evidence="1">
    <location>
        <position position="217"/>
    </location>
</feature>
<name>PATR_MYCTO</name>
<reference key="1">
    <citation type="journal article" date="2002" name="J. Bacteriol.">
        <title>Whole-genome comparison of Mycobacterium tuberculosis clinical and laboratory strains.</title>
        <authorList>
            <person name="Fleischmann R.D."/>
            <person name="Alland D."/>
            <person name="Eisen J.A."/>
            <person name="Carpenter L."/>
            <person name="White O."/>
            <person name="Peterson J.D."/>
            <person name="DeBoy R.T."/>
            <person name="Dodson R.J."/>
            <person name="Gwinn M.L."/>
            <person name="Haft D.H."/>
            <person name="Hickey E.K."/>
            <person name="Kolonay J.F."/>
            <person name="Nelson W.C."/>
            <person name="Umayam L.A."/>
            <person name="Ermolaeva M.D."/>
            <person name="Salzberg S.L."/>
            <person name="Delcher A."/>
            <person name="Utterback T.R."/>
            <person name="Weidman J.F."/>
            <person name="Khouri H.M."/>
            <person name="Gill J."/>
            <person name="Mikula A."/>
            <person name="Bishai W."/>
            <person name="Jacobs W.R. Jr."/>
            <person name="Venter J.C."/>
            <person name="Fraser C.M."/>
        </authorList>
    </citation>
    <scope>NUCLEOTIDE SEQUENCE [LARGE SCALE GENOMIC DNA]</scope>
    <source>
        <strain>CDC 1551 / Oshkosh</strain>
    </source>
</reference>
<dbReference type="EC" id="2.6.1.57" evidence="1"/>
<dbReference type="EMBL" id="AE000516">
    <property type="protein sequence ID" value="AAK48246.1"/>
    <property type="molecule type" value="Genomic_DNA"/>
</dbReference>
<dbReference type="PIR" id="H70694">
    <property type="entry name" value="H70694"/>
</dbReference>
<dbReference type="SMR" id="P9WML4"/>
<dbReference type="KEGG" id="mtc:MT3881"/>
<dbReference type="PATRIC" id="fig|83331.31.peg.4176"/>
<dbReference type="HOGENOM" id="CLU_017584_3_3_11"/>
<dbReference type="Proteomes" id="UP000001020">
    <property type="component" value="Chromosome"/>
</dbReference>
<dbReference type="GO" id="GO:0008793">
    <property type="term" value="F:aromatic-amino-acid transaminase activity"/>
    <property type="evidence" value="ECO:0007669"/>
    <property type="project" value="UniProtKB-UniRule"/>
</dbReference>
<dbReference type="GO" id="GO:0004400">
    <property type="term" value="F:histidinol-phosphate transaminase activity"/>
    <property type="evidence" value="ECO:0007669"/>
    <property type="project" value="InterPro"/>
</dbReference>
<dbReference type="GO" id="GO:0030170">
    <property type="term" value="F:pyridoxal phosphate binding"/>
    <property type="evidence" value="ECO:0007669"/>
    <property type="project" value="UniProtKB-UniRule"/>
</dbReference>
<dbReference type="GO" id="GO:0000105">
    <property type="term" value="P:L-histidine biosynthetic process"/>
    <property type="evidence" value="ECO:0007669"/>
    <property type="project" value="InterPro"/>
</dbReference>
<dbReference type="CDD" id="cd00609">
    <property type="entry name" value="AAT_like"/>
    <property type="match status" value="1"/>
</dbReference>
<dbReference type="Gene3D" id="3.90.1150.10">
    <property type="entry name" value="Aspartate Aminotransferase, domain 1"/>
    <property type="match status" value="1"/>
</dbReference>
<dbReference type="Gene3D" id="3.40.640.10">
    <property type="entry name" value="Type I PLP-dependent aspartate aminotransferase-like (Major domain)"/>
    <property type="match status" value="1"/>
</dbReference>
<dbReference type="HAMAP" id="MF_01023">
    <property type="entry name" value="HisC_aminotrans_2"/>
    <property type="match status" value="1"/>
</dbReference>
<dbReference type="HAMAP" id="MF_01513">
    <property type="entry name" value="Phe_aminotrans_2"/>
    <property type="match status" value="1"/>
</dbReference>
<dbReference type="InterPro" id="IPR001917">
    <property type="entry name" value="Aminotrans_II_pyridoxalP_BS"/>
</dbReference>
<dbReference type="InterPro" id="IPR004839">
    <property type="entry name" value="Aminotransferase_I/II_large"/>
</dbReference>
<dbReference type="InterPro" id="IPR024892">
    <property type="entry name" value="ArAT"/>
</dbReference>
<dbReference type="InterPro" id="IPR005861">
    <property type="entry name" value="HisP_aminotrans"/>
</dbReference>
<dbReference type="InterPro" id="IPR050106">
    <property type="entry name" value="HistidinolP_aminotransfase"/>
</dbReference>
<dbReference type="InterPro" id="IPR015424">
    <property type="entry name" value="PyrdxlP-dep_Trfase"/>
</dbReference>
<dbReference type="InterPro" id="IPR015421">
    <property type="entry name" value="PyrdxlP-dep_Trfase_major"/>
</dbReference>
<dbReference type="InterPro" id="IPR015422">
    <property type="entry name" value="PyrdxlP-dep_Trfase_small"/>
</dbReference>
<dbReference type="NCBIfam" id="NF002878">
    <property type="entry name" value="PRK03321.1"/>
    <property type="match status" value="1"/>
</dbReference>
<dbReference type="PANTHER" id="PTHR43643:SF3">
    <property type="entry name" value="HISTIDINOL-PHOSPHATE AMINOTRANSFERASE"/>
    <property type="match status" value="1"/>
</dbReference>
<dbReference type="PANTHER" id="PTHR43643">
    <property type="entry name" value="HISTIDINOL-PHOSPHATE AMINOTRANSFERASE 2"/>
    <property type="match status" value="1"/>
</dbReference>
<dbReference type="Pfam" id="PF00155">
    <property type="entry name" value="Aminotran_1_2"/>
    <property type="match status" value="1"/>
</dbReference>
<dbReference type="SUPFAM" id="SSF53383">
    <property type="entry name" value="PLP-dependent transferases"/>
    <property type="match status" value="1"/>
</dbReference>
<dbReference type="PROSITE" id="PS00599">
    <property type="entry name" value="AA_TRANSFER_CLASS_2"/>
    <property type="match status" value="1"/>
</dbReference>
<sequence>MTARLRPELAGLPVYVPGKTVPGAIKLASNETVFGPLPSVRAAIDRATDTVNRYPDNGCVQLKAALARHLGPDFAPEHVAVGCGSVSLCQQLVQVTASVGDEVVFGWRSFELYPPQVRVAGAIPIQVPLTDHTFDLYAMLATVTDRTRLIFVCNPNNPTSTVVGPDALARFVEAVPAHILIAIDEAYVEYIRDGMRPDSLGLVRAHNNVVVLRTFSKAYGLAGLRIGYAIGHPDVITALDKVYVPFTVSSIGQAAAIASLDAADELLARTDTVVAERARVSAELRAAGFTLPPSQANFVWLPLGSRTQDFVEQAADARIVVRPYGTDGVRVTVAAPEENDAFLRFARRWRSDQ</sequence>
<comment type="function">
    <text evidence="1">Aminotransferase that catalyzes the conversion of aromatic amino acids and 2-oxoglutarate into corresponding aromatic oxo acids and L-glutamate.</text>
</comment>
<comment type="catalytic activity">
    <reaction evidence="1">
        <text>an aromatic L-alpha-amino acid + 2-oxoglutarate = an aromatic oxo-acid + L-glutamate</text>
        <dbReference type="Rhea" id="RHEA:17533"/>
        <dbReference type="ChEBI" id="CHEBI:16810"/>
        <dbReference type="ChEBI" id="CHEBI:29985"/>
        <dbReference type="ChEBI" id="CHEBI:73309"/>
        <dbReference type="ChEBI" id="CHEBI:84824"/>
        <dbReference type="EC" id="2.6.1.57"/>
    </reaction>
</comment>
<comment type="cofactor">
    <cofactor evidence="1">
        <name>pyridoxal 5'-phosphate</name>
        <dbReference type="ChEBI" id="CHEBI:597326"/>
    </cofactor>
</comment>
<comment type="subunit">
    <text evidence="1">Homodimer.</text>
</comment>
<comment type="similarity">
    <text evidence="1">Belongs to the class-II pyridoxal-phosphate-dependent aminotransferase family.</text>
</comment>
<accession>P9WML4</accession>
<accession>L0TGI3</accession>
<accession>P72039</accession>
<gene>
    <name evidence="1" type="primary">pat</name>
    <name type="synonym">hisC2</name>
    <name type="ordered locus">MT3881</name>
</gene>
<proteinExistence type="inferred from homology"/>
<protein>
    <recommendedName>
        <fullName evidence="1">Aromatic amino acid aminotransferase</fullName>
        <shortName evidence="1">ArAT</shortName>
        <ecNumber evidence="1">2.6.1.57</ecNumber>
    </recommendedName>
</protein>